<reference key="1">
    <citation type="journal article" date="1982" name="J. Biol. Chem.">
        <title>Isolation, characterization, and amino acid sequence of a ubiquitin-like protein from insect eggs.</title>
        <authorList>
            <person name="Gavilanes J.G."/>
            <person name="Gonzalez de Buitrago G."/>
            <person name="Perez-Castells R."/>
            <person name="Rodriguez R."/>
        </authorList>
    </citation>
    <scope>PROTEIN SEQUENCE OF 1-74</scope>
</reference>
<keyword id="KW-0963">Cytoplasm</keyword>
<keyword id="KW-0903">Direct protein sequencing</keyword>
<keyword id="KW-1017">Isopeptide bond</keyword>
<keyword id="KW-0539">Nucleus</keyword>
<keyword id="KW-0832">Ubl conjugation</keyword>
<dbReference type="PIR" id="A02575">
    <property type="entry name" value="UQFFM"/>
</dbReference>
<dbReference type="SMR" id="P68197"/>
<dbReference type="EnsemblMetazoa" id="XM_004533275.3">
    <property type="protein sequence ID" value="XP_004533332.1"/>
    <property type="gene ID" value="LOC101457100"/>
</dbReference>
<dbReference type="OrthoDB" id="428577at2759"/>
<dbReference type="GO" id="GO:0005737">
    <property type="term" value="C:cytoplasm"/>
    <property type="evidence" value="ECO:0007669"/>
    <property type="project" value="UniProtKB-SubCell"/>
</dbReference>
<dbReference type="GO" id="GO:0005634">
    <property type="term" value="C:nucleus"/>
    <property type="evidence" value="ECO:0007669"/>
    <property type="project" value="UniProtKB-SubCell"/>
</dbReference>
<dbReference type="CDD" id="cd01803">
    <property type="entry name" value="Ubl_ubiquitin"/>
    <property type="match status" value="1"/>
</dbReference>
<dbReference type="FunFam" id="3.10.20.90:FF:000158">
    <property type="entry name" value="Polyubiquitin 5"/>
    <property type="match status" value="1"/>
</dbReference>
<dbReference type="Gene3D" id="3.10.20.90">
    <property type="entry name" value="Phosphatidylinositol 3-kinase Catalytic Subunit, Chain A, domain 1"/>
    <property type="match status" value="1"/>
</dbReference>
<dbReference type="InterPro" id="IPR000626">
    <property type="entry name" value="Ubiquitin-like_dom"/>
</dbReference>
<dbReference type="InterPro" id="IPR029071">
    <property type="entry name" value="Ubiquitin-like_domsf"/>
</dbReference>
<dbReference type="InterPro" id="IPR019954">
    <property type="entry name" value="Ubiquitin_CS"/>
</dbReference>
<dbReference type="InterPro" id="IPR019956">
    <property type="entry name" value="Ubiquitin_dom"/>
</dbReference>
<dbReference type="InterPro" id="IPR050158">
    <property type="entry name" value="Ubiquitin_ubiquitin-like"/>
</dbReference>
<dbReference type="PANTHER" id="PTHR10666">
    <property type="entry name" value="UBIQUITIN"/>
    <property type="match status" value="1"/>
</dbReference>
<dbReference type="Pfam" id="PF00240">
    <property type="entry name" value="ubiquitin"/>
    <property type="match status" value="1"/>
</dbReference>
<dbReference type="PRINTS" id="PR00348">
    <property type="entry name" value="UBIQUITIN"/>
</dbReference>
<dbReference type="SMART" id="SM00213">
    <property type="entry name" value="UBQ"/>
    <property type="match status" value="1"/>
</dbReference>
<dbReference type="SUPFAM" id="SSF54236">
    <property type="entry name" value="Ubiquitin-like"/>
    <property type="match status" value="1"/>
</dbReference>
<dbReference type="PROSITE" id="PS00299">
    <property type="entry name" value="UBIQUITIN_1"/>
    <property type="match status" value="1"/>
</dbReference>
<dbReference type="PROSITE" id="PS50053">
    <property type="entry name" value="UBIQUITIN_2"/>
    <property type="match status" value="1"/>
</dbReference>
<organism>
    <name type="scientific">Ceratitis capitata</name>
    <name type="common">Mediterranean fruit fly</name>
    <name type="synonym">Tephritis capitata</name>
    <dbReference type="NCBI Taxonomy" id="7213"/>
    <lineage>
        <taxon>Eukaryota</taxon>
        <taxon>Metazoa</taxon>
        <taxon>Ecdysozoa</taxon>
        <taxon>Arthropoda</taxon>
        <taxon>Hexapoda</taxon>
        <taxon>Insecta</taxon>
        <taxon>Pterygota</taxon>
        <taxon>Neoptera</taxon>
        <taxon>Endopterygota</taxon>
        <taxon>Diptera</taxon>
        <taxon>Brachycera</taxon>
        <taxon>Muscomorpha</taxon>
        <taxon>Tephritoidea</taxon>
        <taxon>Tephritidae</taxon>
        <taxon>Ceratitis</taxon>
        <taxon>Ceratitis</taxon>
    </lineage>
</organism>
<sequence>MQIFVKTLTGKTITLEVEPSDTIENVKAKIQDKEGIPPDQQRLIFAGKQLEDGRTLSDYNIQKESTLHLVLRLRGG</sequence>
<protein>
    <recommendedName>
        <fullName>Ubiquitin</fullName>
    </recommendedName>
</protein>
<feature type="chain" id="PRO_0000114812" description="Ubiquitin">
    <location>
        <begin position="1"/>
        <end position="76"/>
    </location>
</feature>
<feature type="domain" description="Ubiquitin-like" evidence="2">
    <location>
        <begin position="1"/>
        <end position="76"/>
    </location>
</feature>
<feature type="site" description="Interacts with activating enzyme">
    <location>
        <position position="54"/>
    </location>
</feature>
<feature type="site" description="Essential for function">
    <location>
        <position position="68"/>
    </location>
</feature>
<feature type="site" description="Interacts with activating enzyme">
    <location>
        <position position="72"/>
    </location>
</feature>
<feature type="cross-link" description="Glycyl lysine isopeptide (Lys-Gly) (interchain with G-Cter in ubiquitin)">
    <location>
        <position position="48"/>
    </location>
</feature>
<feature type="cross-link" description="Glycyl lysine isopeptide (Gly-Lys) (interchain with K-? in acceptor proteins)" evidence="2">
    <location>
        <position position="76"/>
    </location>
</feature>
<name>UBIQ_CERCA</name>
<comment type="function">
    <text evidence="1">Ubiquitin exists either covalently attached to another protein, or free (unanchored). When covalently bound, it is conjugated to target proteins via an isopeptide bond either as a monomer (monoubiquitin), a polymer linked via different Lys residues of the ubiquitin (polyubiquitin chains) or a linear polymer linked via the initiator Met of the ubiquitin (linear polyubiquitin chains). Polyubiquitin chains, when attached to a target protein, have different functions depending on the Lys residue of the ubiquitin that is linked: Lys-48-linked is involved in protein degradation via the proteasome. Linear polymer chains formed via attachment by the initiator Met lead to cell signaling. Ubiquitin is usually conjugated to Lys residues of target proteins, however, in rare cases, conjugation to Cys or Ser residues has been observed. When polyubiquitin is free (unanchored-polyubiquitin), it also has distinct roles, such as in activation of protein kinases, and in signaling (By similarity).</text>
</comment>
<comment type="subcellular location">
    <subcellularLocation>
        <location evidence="1">Cytoplasm</location>
    </subcellularLocation>
    <subcellularLocation>
        <location evidence="1">Nucleus</location>
    </subcellularLocation>
</comment>
<comment type="similarity">
    <text evidence="3">Belongs to the ubiquitin family.</text>
</comment>
<accession>P68197</accession>
<accession>Q9VKW6</accession>
<accession>Q9VQX7</accession>
<accession>Q9VZL4</accession>
<proteinExistence type="evidence at protein level"/>
<evidence type="ECO:0000250" key="1"/>
<evidence type="ECO:0000255" key="2">
    <source>
        <dbReference type="PROSITE-ProRule" id="PRU00214"/>
    </source>
</evidence>
<evidence type="ECO:0000305" key="3"/>